<gene>
    <name evidence="1" type="primary">SCT</name>
</gene>
<sequence>HSDGTFTSELSRLRDSARLQRLLQGLV</sequence>
<protein>
    <recommendedName>
        <fullName evidence="5">Secretin</fullName>
    </recommendedName>
</protein>
<name>SECR_BOVIN</name>
<accession>P63296</accession>
<accession>P01279</accession>
<accession>Q9TR13</accession>
<evidence type="ECO:0000250" key="1">
    <source>
        <dbReference type="UniProtKB" id="P09683"/>
    </source>
</evidence>
<evidence type="ECO:0000250" key="2">
    <source>
        <dbReference type="UniProtKB" id="P11384"/>
    </source>
</evidence>
<evidence type="ECO:0000250" key="3">
    <source>
        <dbReference type="UniProtKB" id="Q08535"/>
    </source>
</evidence>
<evidence type="ECO:0000269" key="4">
    <source>
    </source>
</evidence>
<evidence type="ECO:0000303" key="5">
    <source>
    </source>
</evidence>
<evidence type="ECO:0000305" key="6"/>
<feature type="peptide" id="PRO_0000043933" description="Secretin" evidence="4">
    <location>
        <begin position="1"/>
        <end position="27"/>
    </location>
</feature>
<feature type="modified residue" description="Valine amide" evidence="4">
    <location>
        <position position="27"/>
    </location>
</feature>
<proteinExistence type="evidence at protein level"/>
<comment type="function">
    <text evidence="2 3">Hormone involved in different processes, such as regulation of the pH of the duodenal content, food intake and water homeostasis. Exerts its biological effects by binding to secretin receptor (SCTR), a G-protein coupled receptor expressed in the basolateral domain of several cells. Acts as a key gastrointestinal hormone by regulating the pH of the duodenal content. Secreted by S cells of the duodenum in the crypts of Lieberkuehn and regulates the pH of the duodenum by (1) inhibiting the secretion of gastric acid from the parietal cells of the stomach and (2) stimulating the production of bicarbonate (NaHCO(3)) from the ductal cells of the pancreas (By similarity). Production of bicarbonate is essential to neutralize the pH and ensure no damage is done to the small intestine by the gastric acid. In addition to regulating the pH of the duodenal content, plays a central role in diet induced thermogenesis: acts as a non-sympathetic brown fat (BAT) activator mediating prandial thermogenesis, which consequentially induces satiation. Mechanistically, secretin released by the gut after a meal binds to secretin receptor (SCTR) in brown adipocytes, activating brown fat thermogenesis by stimulating lipolysis, which is sensed in the brain and promotes satiation. Also able to stimulate lipolysis in white adipocytes (By similarity). Also plays an important role in cellular osmoregulation: released into the systemic circulation in response to hyperosmolality and acts at different levels in the hypothalamus, pituitary and kidney to regulate water homeostasis (By similarity). Also plays a role in the central nervous system, possibly by acting as a neuropeptide hormone: required for hippocampal synaptic function and neural progenitor cells maintenance (By similarity).</text>
</comment>
<comment type="subcellular location">
    <subcellularLocation>
        <location evidence="4">Secreted</location>
    </subcellularLocation>
</comment>
<comment type="similarity">
    <text evidence="6">Belongs to the glucagon family.</text>
</comment>
<dbReference type="BMRB" id="P63296"/>
<dbReference type="SMR" id="P63296"/>
<dbReference type="STRING" id="9913.ENSBTAP00000071309"/>
<dbReference type="PaxDb" id="9913-ENSBTAP00000055330"/>
<dbReference type="eggNOG" id="ENOG502R8F0">
    <property type="taxonomic scope" value="Eukaryota"/>
</dbReference>
<dbReference type="HOGENOM" id="CLU_1991937_0_0_1"/>
<dbReference type="InParanoid" id="P63296"/>
<dbReference type="Proteomes" id="UP000009136">
    <property type="component" value="Unplaced"/>
</dbReference>
<dbReference type="GO" id="GO:0005615">
    <property type="term" value="C:extracellular space"/>
    <property type="evidence" value="ECO:0000250"/>
    <property type="project" value="UniProtKB"/>
</dbReference>
<dbReference type="GO" id="GO:0046659">
    <property type="term" value="F:digestive hormone activity"/>
    <property type="evidence" value="ECO:0000250"/>
    <property type="project" value="UniProtKB"/>
</dbReference>
<dbReference type="GO" id="GO:0005179">
    <property type="term" value="F:hormone activity"/>
    <property type="evidence" value="ECO:0000250"/>
    <property type="project" value="UniProtKB"/>
</dbReference>
<dbReference type="GO" id="GO:0007189">
    <property type="term" value="P:adenylate cyclase-activating G protein-coupled receptor signaling pathway"/>
    <property type="evidence" value="ECO:0000250"/>
    <property type="project" value="UniProtKB"/>
</dbReference>
<dbReference type="GO" id="GO:0002024">
    <property type="term" value="P:diet induced thermogenesis"/>
    <property type="evidence" value="ECO:0000250"/>
    <property type="project" value="UniProtKB"/>
</dbReference>
<dbReference type="GO" id="GO:0021766">
    <property type="term" value="P:hippocampus development"/>
    <property type="evidence" value="ECO:0000250"/>
    <property type="project" value="UniProtKB"/>
</dbReference>
<dbReference type="GO" id="GO:0009992">
    <property type="term" value="P:intracellular water homeostasis"/>
    <property type="evidence" value="ECO:0000250"/>
    <property type="project" value="UniProtKB"/>
</dbReference>
<dbReference type="GO" id="GO:0050996">
    <property type="term" value="P:positive regulation of lipid catabolic process"/>
    <property type="evidence" value="ECO:0000250"/>
    <property type="project" value="UniProtKB"/>
</dbReference>
<dbReference type="GO" id="GO:0032098">
    <property type="term" value="P:regulation of appetite"/>
    <property type="evidence" value="ECO:0000250"/>
    <property type="project" value="UniProtKB"/>
</dbReference>
<dbReference type="GO" id="GO:0048167">
    <property type="term" value="P:regulation of synaptic plasticity"/>
    <property type="evidence" value="ECO:0000250"/>
    <property type="project" value="UniProtKB"/>
</dbReference>
<dbReference type="GO" id="GO:0031667">
    <property type="term" value="P:response to nutrient levels"/>
    <property type="evidence" value="ECO:0000250"/>
    <property type="project" value="UniProtKB"/>
</dbReference>
<dbReference type="Gene3D" id="6.10.250.590">
    <property type="match status" value="1"/>
</dbReference>
<dbReference type="InterPro" id="IPR000532">
    <property type="entry name" value="Glucagon_GIP_secretin_VIP"/>
</dbReference>
<dbReference type="InterPro" id="IPR015675">
    <property type="entry name" value="Prosecretin"/>
</dbReference>
<dbReference type="PANTHER" id="PTHR17378">
    <property type="entry name" value="SECRETIN"/>
    <property type="match status" value="1"/>
</dbReference>
<dbReference type="PANTHER" id="PTHR17378:SF1">
    <property type="entry name" value="SECRETIN"/>
    <property type="match status" value="1"/>
</dbReference>
<dbReference type="Pfam" id="PF00123">
    <property type="entry name" value="Hormone_2"/>
    <property type="match status" value="1"/>
</dbReference>
<dbReference type="SMART" id="SM00070">
    <property type="entry name" value="GLUCA"/>
    <property type="match status" value="1"/>
</dbReference>
<dbReference type="PROSITE" id="PS00260">
    <property type="entry name" value="GLUCAGON"/>
    <property type="match status" value="1"/>
</dbReference>
<organism>
    <name type="scientific">Bos taurus</name>
    <name type="common">Bovine</name>
    <dbReference type="NCBI Taxonomy" id="9913"/>
    <lineage>
        <taxon>Eukaryota</taxon>
        <taxon>Metazoa</taxon>
        <taxon>Chordata</taxon>
        <taxon>Craniata</taxon>
        <taxon>Vertebrata</taxon>
        <taxon>Euteleostomi</taxon>
        <taxon>Mammalia</taxon>
        <taxon>Eutheria</taxon>
        <taxon>Laurasiatheria</taxon>
        <taxon>Artiodactyla</taxon>
        <taxon>Ruminantia</taxon>
        <taxon>Pecora</taxon>
        <taxon>Bovidae</taxon>
        <taxon>Bovinae</taxon>
        <taxon>Bos</taxon>
    </lineage>
</organism>
<reference key="1">
    <citation type="journal article" date="1981" name="FEBS Lett.">
        <title>Isolation and amino acid sequence of bovine secretin.</title>
        <authorList>
            <person name="Carlquist M."/>
            <person name="Joernvall H."/>
            <person name="Mutt V."/>
        </authorList>
    </citation>
    <scope>PROTEIN SEQUENCE</scope>
    <scope>SUBCELLULAR LOCATION</scope>
    <scope>AMIDATION AT VAL-27</scope>
</reference>
<keyword id="KW-0027">Amidation</keyword>
<keyword id="KW-0903">Direct protein sequencing</keyword>
<keyword id="KW-0372">Hormone</keyword>
<keyword id="KW-1185">Reference proteome</keyword>
<keyword id="KW-0964">Secreted</keyword>